<comment type="function">
    <text evidence="1">Negatively regulates transcription of bacterial ribonucleotide reductase nrd genes and operons by binding to NrdR-boxes.</text>
</comment>
<comment type="cofactor">
    <cofactor evidence="1">
        <name>Zn(2+)</name>
        <dbReference type="ChEBI" id="CHEBI:29105"/>
    </cofactor>
    <text evidence="1">Binds 1 zinc ion.</text>
</comment>
<comment type="similarity">
    <text evidence="1">Belongs to the NrdR family.</text>
</comment>
<protein>
    <recommendedName>
        <fullName evidence="1">Transcriptional repressor NrdR</fullName>
    </recommendedName>
</protein>
<organism>
    <name type="scientific">Burkholderia cenocepacia (strain ATCC BAA-245 / DSM 16553 / LMG 16656 / NCTC 13227 / J2315 / CF5610)</name>
    <name type="common">Burkholderia cepacia (strain J2315)</name>
    <dbReference type="NCBI Taxonomy" id="216591"/>
    <lineage>
        <taxon>Bacteria</taxon>
        <taxon>Pseudomonadati</taxon>
        <taxon>Pseudomonadota</taxon>
        <taxon>Betaproteobacteria</taxon>
        <taxon>Burkholderiales</taxon>
        <taxon>Burkholderiaceae</taxon>
        <taxon>Burkholderia</taxon>
        <taxon>Burkholderia cepacia complex</taxon>
    </lineage>
</organism>
<evidence type="ECO:0000255" key="1">
    <source>
        <dbReference type="HAMAP-Rule" id="MF_00440"/>
    </source>
</evidence>
<sequence>MRCPFCRHDDTQVVDSRVSEDGAAIRRRRRCSACDKRFTTYERVELSLPFVVKKDGSRTEFDRRKIVASMQLALRKRPVAADAIDAAVARIEYQLLATGEREVRSEKLGELVMNELRGLDTIAYVRFASVYRRFEDVSEFADVIEEFRRASPAKTPRKR</sequence>
<reference key="1">
    <citation type="journal article" date="2009" name="J. Bacteriol.">
        <title>The genome of Burkholderia cenocepacia J2315, an epidemic pathogen of cystic fibrosis patients.</title>
        <authorList>
            <person name="Holden M.T."/>
            <person name="Seth-Smith H.M."/>
            <person name="Crossman L.C."/>
            <person name="Sebaihia M."/>
            <person name="Bentley S.D."/>
            <person name="Cerdeno-Tarraga A.M."/>
            <person name="Thomson N.R."/>
            <person name="Bason N."/>
            <person name="Quail M.A."/>
            <person name="Sharp S."/>
            <person name="Cherevach I."/>
            <person name="Churcher C."/>
            <person name="Goodhead I."/>
            <person name="Hauser H."/>
            <person name="Holroyd N."/>
            <person name="Mungall K."/>
            <person name="Scott P."/>
            <person name="Walker D."/>
            <person name="White B."/>
            <person name="Rose H."/>
            <person name="Iversen P."/>
            <person name="Mil-Homens D."/>
            <person name="Rocha E.P."/>
            <person name="Fialho A.M."/>
            <person name="Baldwin A."/>
            <person name="Dowson C."/>
            <person name="Barrell B.G."/>
            <person name="Govan J.R."/>
            <person name="Vandamme P."/>
            <person name="Hart C.A."/>
            <person name="Mahenthiralingam E."/>
            <person name="Parkhill J."/>
        </authorList>
    </citation>
    <scope>NUCLEOTIDE SEQUENCE [LARGE SCALE GENOMIC DNA]</scope>
    <source>
        <strain>ATCC BAA-245 / DSM 16553 / LMG 16656 / NCTC 13227 / J2315 / CF5610</strain>
    </source>
</reference>
<feature type="chain" id="PRO_1000124475" description="Transcriptional repressor NrdR">
    <location>
        <begin position="1"/>
        <end position="159"/>
    </location>
</feature>
<feature type="domain" description="ATP-cone" evidence="1">
    <location>
        <begin position="49"/>
        <end position="139"/>
    </location>
</feature>
<feature type="zinc finger region" evidence="1">
    <location>
        <begin position="3"/>
        <end position="34"/>
    </location>
</feature>
<gene>
    <name evidence="1" type="primary">nrdR</name>
    <name type="ordered locus">BceJ2315_31410</name>
    <name type="ORF">BCAL3196</name>
</gene>
<dbReference type="EMBL" id="AM747720">
    <property type="protein sequence ID" value="CAR53520.1"/>
    <property type="molecule type" value="Genomic_DNA"/>
</dbReference>
<dbReference type="RefSeq" id="WP_006476792.1">
    <property type="nucleotide sequence ID" value="NC_011000.1"/>
</dbReference>
<dbReference type="SMR" id="B4ECY8"/>
<dbReference type="GeneID" id="93192949"/>
<dbReference type="KEGG" id="bcj:BCAL3196"/>
<dbReference type="eggNOG" id="COG1327">
    <property type="taxonomic scope" value="Bacteria"/>
</dbReference>
<dbReference type="HOGENOM" id="CLU_108412_0_0_4"/>
<dbReference type="BioCyc" id="BCEN216591:G1G1V-3544-MONOMER"/>
<dbReference type="Proteomes" id="UP000001035">
    <property type="component" value="Chromosome 1"/>
</dbReference>
<dbReference type="GO" id="GO:0005524">
    <property type="term" value="F:ATP binding"/>
    <property type="evidence" value="ECO:0007669"/>
    <property type="project" value="UniProtKB-KW"/>
</dbReference>
<dbReference type="GO" id="GO:0003677">
    <property type="term" value="F:DNA binding"/>
    <property type="evidence" value="ECO:0007669"/>
    <property type="project" value="UniProtKB-KW"/>
</dbReference>
<dbReference type="GO" id="GO:0008270">
    <property type="term" value="F:zinc ion binding"/>
    <property type="evidence" value="ECO:0007669"/>
    <property type="project" value="UniProtKB-UniRule"/>
</dbReference>
<dbReference type="GO" id="GO:0045892">
    <property type="term" value="P:negative regulation of DNA-templated transcription"/>
    <property type="evidence" value="ECO:0007669"/>
    <property type="project" value="UniProtKB-UniRule"/>
</dbReference>
<dbReference type="HAMAP" id="MF_00440">
    <property type="entry name" value="NrdR"/>
    <property type="match status" value="1"/>
</dbReference>
<dbReference type="InterPro" id="IPR005144">
    <property type="entry name" value="ATP-cone_dom"/>
</dbReference>
<dbReference type="InterPro" id="IPR055173">
    <property type="entry name" value="NrdR-like_N"/>
</dbReference>
<dbReference type="InterPro" id="IPR003796">
    <property type="entry name" value="RNR_NrdR-like"/>
</dbReference>
<dbReference type="NCBIfam" id="TIGR00244">
    <property type="entry name" value="transcriptional regulator NrdR"/>
    <property type="match status" value="1"/>
</dbReference>
<dbReference type="PANTHER" id="PTHR30455">
    <property type="entry name" value="TRANSCRIPTIONAL REPRESSOR NRDR"/>
    <property type="match status" value="1"/>
</dbReference>
<dbReference type="PANTHER" id="PTHR30455:SF2">
    <property type="entry name" value="TRANSCRIPTIONAL REPRESSOR NRDR"/>
    <property type="match status" value="1"/>
</dbReference>
<dbReference type="Pfam" id="PF03477">
    <property type="entry name" value="ATP-cone"/>
    <property type="match status" value="1"/>
</dbReference>
<dbReference type="Pfam" id="PF22811">
    <property type="entry name" value="Zn_ribbon_NrdR"/>
    <property type="match status" value="1"/>
</dbReference>
<dbReference type="PROSITE" id="PS51161">
    <property type="entry name" value="ATP_CONE"/>
    <property type="match status" value="1"/>
</dbReference>
<keyword id="KW-0067">ATP-binding</keyword>
<keyword id="KW-0238">DNA-binding</keyword>
<keyword id="KW-0479">Metal-binding</keyword>
<keyword id="KW-0547">Nucleotide-binding</keyword>
<keyword id="KW-0678">Repressor</keyword>
<keyword id="KW-0804">Transcription</keyword>
<keyword id="KW-0805">Transcription regulation</keyword>
<keyword id="KW-0862">Zinc</keyword>
<keyword id="KW-0863">Zinc-finger</keyword>
<accession>B4ECY8</accession>
<name>NRDR_BURCJ</name>
<proteinExistence type="inferred from homology"/>